<accession>B0TI89</accession>
<organism>
    <name type="scientific">Heliobacterium modesticaldum (strain ATCC 51547 / Ice1)</name>
    <dbReference type="NCBI Taxonomy" id="498761"/>
    <lineage>
        <taxon>Bacteria</taxon>
        <taxon>Bacillati</taxon>
        <taxon>Bacillota</taxon>
        <taxon>Clostridia</taxon>
        <taxon>Eubacteriales</taxon>
        <taxon>Heliobacteriaceae</taxon>
        <taxon>Heliomicrobium</taxon>
    </lineage>
</organism>
<sequence>MNFVEAIRRRISAAVVQALEGARNAKEVNVGPIPPFALEVPREKQHGDFATNVAMLMAREARMNPRQLAEKIVARIDRGDWLKDVQVAGPGFINFTLHHAWLYPVLPAVQQADEAYGASKVGAGRRVQVEFVSANPTGLLHMGNARGAALGDTLANLLRLAGFDVQKEFYINDAGNQIENFAKSLEARYLQLLGRDVPFPEEGYHGEDIVETMRGLIAKEGDKYLALESSLRREMLVKYALREKLDAIRRTLERFGVVYDVWFSEQSLHDSGAIQQTLERLRANGYIYENEGALWFKATALGEEKDEVLVRSNGIPTYFAADIAYHKNKFDRGFDWVINIWGADHHGHVSRMKNAVKAVGYDPKKLDVILMQLVRLYKGGEIVRMSKRTGQYITLDELIEEVGKDAARFFFVMRGADAHLDFDLDLAKRQSSENPVFYVQYAHARICSILRTAQEAGYAVPQGQQVEAGLDLTVLDHPAELALIRKIADLPDEVARAATQMEPHRMARYAQDLAALFHSFYTHCRVLTDEKELRDARLLLVDDSRIVLRNVLHCMGLTAPERM</sequence>
<feature type="chain" id="PRO_1000095368" description="Arginine--tRNA ligase">
    <location>
        <begin position="1"/>
        <end position="563"/>
    </location>
</feature>
<feature type="short sequence motif" description="'HIGH' region">
    <location>
        <begin position="134"/>
        <end position="144"/>
    </location>
</feature>
<dbReference type="EC" id="6.1.1.19" evidence="1"/>
<dbReference type="EMBL" id="CP000930">
    <property type="protein sequence ID" value="ABZ83509.1"/>
    <property type="molecule type" value="Genomic_DNA"/>
</dbReference>
<dbReference type="RefSeq" id="WP_012282038.1">
    <property type="nucleotide sequence ID" value="NC_010337.2"/>
</dbReference>
<dbReference type="SMR" id="B0TI89"/>
<dbReference type="STRING" id="498761.HM1_1065"/>
<dbReference type="KEGG" id="hmo:HM1_1065"/>
<dbReference type="eggNOG" id="COG0018">
    <property type="taxonomic scope" value="Bacteria"/>
</dbReference>
<dbReference type="HOGENOM" id="CLU_006406_0_1_9"/>
<dbReference type="OrthoDB" id="9805987at2"/>
<dbReference type="Proteomes" id="UP000008550">
    <property type="component" value="Chromosome"/>
</dbReference>
<dbReference type="GO" id="GO:0005737">
    <property type="term" value="C:cytoplasm"/>
    <property type="evidence" value="ECO:0007669"/>
    <property type="project" value="UniProtKB-SubCell"/>
</dbReference>
<dbReference type="GO" id="GO:0004814">
    <property type="term" value="F:arginine-tRNA ligase activity"/>
    <property type="evidence" value="ECO:0007669"/>
    <property type="project" value="UniProtKB-UniRule"/>
</dbReference>
<dbReference type="GO" id="GO:0005524">
    <property type="term" value="F:ATP binding"/>
    <property type="evidence" value="ECO:0007669"/>
    <property type="project" value="UniProtKB-UniRule"/>
</dbReference>
<dbReference type="GO" id="GO:0006420">
    <property type="term" value="P:arginyl-tRNA aminoacylation"/>
    <property type="evidence" value="ECO:0007669"/>
    <property type="project" value="UniProtKB-UniRule"/>
</dbReference>
<dbReference type="CDD" id="cd00671">
    <property type="entry name" value="ArgRS_core"/>
    <property type="match status" value="1"/>
</dbReference>
<dbReference type="FunFam" id="1.10.730.10:FF:000008">
    <property type="entry name" value="Arginine--tRNA ligase"/>
    <property type="match status" value="1"/>
</dbReference>
<dbReference type="FunFam" id="3.30.1360.70:FF:000003">
    <property type="entry name" value="Arginine--tRNA ligase"/>
    <property type="match status" value="1"/>
</dbReference>
<dbReference type="FunFam" id="3.40.50.620:FF:000062">
    <property type="entry name" value="Arginine--tRNA ligase"/>
    <property type="match status" value="1"/>
</dbReference>
<dbReference type="Gene3D" id="3.30.1360.70">
    <property type="entry name" value="Arginyl tRNA synthetase N-terminal domain"/>
    <property type="match status" value="1"/>
</dbReference>
<dbReference type="Gene3D" id="3.40.50.620">
    <property type="entry name" value="HUPs"/>
    <property type="match status" value="1"/>
</dbReference>
<dbReference type="Gene3D" id="1.10.730.10">
    <property type="entry name" value="Isoleucyl-tRNA Synthetase, Domain 1"/>
    <property type="match status" value="1"/>
</dbReference>
<dbReference type="HAMAP" id="MF_00123">
    <property type="entry name" value="Arg_tRNA_synth"/>
    <property type="match status" value="1"/>
</dbReference>
<dbReference type="InterPro" id="IPR001412">
    <property type="entry name" value="aa-tRNA-synth_I_CS"/>
</dbReference>
<dbReference type="InterPro" id="IPR001278">
    <property type="entry name" value="Arg-tRNA-ligase"/>
</dbReference>
<dbReference type="InterPro" id="IPR005148">
    <property type="entry name" value="Arg-tRNA-synth_N"/>
</dbReference>
<dbReference type="InterPro" id="IPR036695">
    <property type="entry name" value="Arg-tRNA-synth_N_sf"/>
</dbReference>
<dbReference type="InterPro" id="IPR035684">
    <property type="entry name" value="ArgRS_core"/>
</dbReference>
<dbReference type="InterPro" id="IPR008909">
    <property type="entry name" value="DALR_anticod-bd"/>
</dbReference>
<dbReference type="InterPro" id="IPR014729">
    <property type="entry name" value="Rossmann-like_a/b/a_fold"/>
</dbReference>
<dbReference type="InterPro" id="IPR009080">
    <property type="entry name" value="tRNAsynth_Ia_anticodon-bd"/>
</dbReference>
<dbReference type="NCBIfam" id="TIGR00456">
    <property type="entry name" value="argS"/>
    <property type="match status" value="1"/>
</dbReference>
<dbReference type="PANTHER" id="PTHR11956:SF5">
    <property type="entry name" value="ARGININE--TRNA LIGASE, CYTOPLASMIC"/>
    <property type="match status" value="1"/>
</dbReference>
<dbReference type="PANTHER" id="PTHR11956">
    <property type="entry name" value="ARGINYL-TRNA SYNTHETASE"/>
    <property type="match status" value="1"/>
</dbReference>
<dbReference type="Pfam" id="PF03485">
    <property type="entry name" value="Arg_tRNA_synt_N"/>
    <property type="match status" value="1"/>
</dbReference>
<dbReference type="Pfam" id="PF05746">
    <property type="entry name" value="DALR_1"/>
    <property type="match status" value="1"/>
</dbReference>
<dbReference type="Pfam" id="PF00750">
    <property type="entry name" value="tRNA-synt_1d"/>
    <property type="match status" value="1"/>
</dbReference>
<dbReference type="PRINTS" id="PR01038">
    <property type="entry name" value="TRNASYNTHARG"/>
</dbReference>
<dbReference type="SMART" id="SM01016">
    <property type="entry name" value="Arg_tRNA_synt_N"/>
    <property type="match status" value="1"/>
</dbReference>
<dbReference type="SMART" id="SM00836">
    <property type="entry name" value="DALR_1"/>
    <property type="match status" value="1"/>
</dbReference>
<dbReference type="SUPFAM" id="SSF47323">
    <property type="entry name" value="Anticodon-binding domain of a subclass of class I aminoacyl-tRNA synthetases"/>
    <property type="match status" value="1"/>
</dbReference>
<dbReference type="SUPFAM" id="SSF55190">
    <property type="entry name" value="Arginyl-tRNA synthetase (ArgRS), N-terminal 'additional' domain"/>
    <property type="match status" value="1"/>
</dbReference>
<dbReference type="SUPFAM" id="SSF52374">
    <property type="entry name" value="Nucleotidylyl transferase"/>
    <property type="match status" value="1"/>
</dbReference>
<dbReference type="PROSITE" id="PS00178">
    <property type="entry name" value="AA_TRNA_LIGASE_I"/>
    <property type="match status" value="1"/>
</dbReference>
<comment type="catalytic activity">
    <reaction evidence="1">
        <text>tRNA(Arg) + L-arginine + ATP = L-arginyl-tRNA(Arg) + AMP + diphosphate</text>
        <dbReference type="Rhea" id="RHEA:20301"/>
        <dbReference type="Rhea" id="RHEA-COMP:9658"/>
        <dbReference type="Rhea" id="RHEA-COMP:9673"/>
        <dbReference type="ChEBI" id="CHEBI:30616"/>
        <dbReference type="ChEBI" id="CHEBI:32682"/>
        <dbReference type="ChEBI" id="CHEBI:33019"/>
        <dbReference type="ChEBI" id="CHEBI:78442"/>
        <dbReference type="ChEBI" id="CHEBI:78513"/>
        <dbReference type="ChEBI" id="CHEBI:456215"/>
        <dbReference type="EC" id="6.1.1.19"/>
    </reaction>
</comment>
<comment type="subunit">
    <text evidence="1">Monomer.</text>
</comment>
<comment type="subcellular location">
    <subcellularLocation>
        <location evidence="1">Cytoplasm</location>
    </subcellularLocation>
</comment>
<comment type="similarity">
    <text evidence="1">Belongs to the class-I aminoacyl-tRNA synthetase family.</text>
</comment>
<proteinExistence type="inferred from homology"/>
<keyword id="KW-0030">Aminoacyl-tRNA synthetase</keyword>
<keyword id="KW-0067">ATP-binding</keyword>
<keyword id="KW-0963">Cytoplasm</keyword>
<keyword id="KW-0436">Ligase</keyword>
<keyword id="KW-0547">Nucleotide-binding</keyword>
<keyword id="KW-0648">Protein biosynthesis</keyword>
<keyword id="KW-1185">Reference proteome</keyword>
<evidence type="ECO:0000255" key="1">
    <source>
        <dbReference type="HAMAP-Rule" id="MF_00123"/>
    </source>
</evidence>
<reference key="1">
    <citation type="journal article" date="2008" name="J. Bacteriol.">
        <title>The genome of Heliobacterium modesticaldum, a phototrophic representative of the Firmicutes containing the simplest photosynthetic apparatus.</title>
        <authorList>
            <person name="Sattley W.M."/>
            <person name="Madigan M.T."/>
            <person name="Swingley W.D."/>
            <person name="Cheung P.C."/>
            <person name="Clocksin K.M."/>
            <person name="Conrad A.L."/>
            <person name="Dejesa L.C."/>
            <person name="Honchak B.M."/>
            <person name="Jung D.O."/>
            <person name="Karbach L.E."/>
            <person name="Kurdoglu A."/>
            <person name="Lahiri S."/>
            <person name="Mastrian S.D."/>
            <person name="Page L.E."/>
            <person name="Taylor H.L."/>
            <person name="Wang Z.T."/>
            <person name="Raymond J."/>
            <person name="Chen M."/>
            <person name="Blankenship R.E."/>
            <person name="Touchman J.W."/>
        </authorList>
    </citation>
    <scope>NUCLEOTIDE SEQUENCE [LARGE SCALE GENOMIC DNA]</scope>
    <source>
        <strain>ATCC 51547 / Ice1</strain>
    </source>
</reference>
<name>SYR_HELMI</name>
<gene>
    <name evidence="1" type="primary">argS</name>
    <name type="ordered locus">Helmi_08840</name>
    <name type="ORF">HM1_1065</name>
</gene>
<protein>
    <recommendedName>
        <fullName evidence="1">Arginine--tRNA ligase</fullName>
        <ecNumber evidence="1">6.1.1.19</ecNumber>
    </recommendedName>
    <alternativeName>
        <fullName evidence="1">Arginyl-tRNA synthetase</fullName>
        <shortName evidence="1">ArgRS</shortName>
    </alternativeName>
</protein>